<dbReference type="EC" id="2.7.7.3" evidence="1"/>
<dbReference type="EMBL" id="AE006468">
    <property type="protein sequence ID" value="AAL22584.1"/>
    <property type="molecule type" value="Genomic_DNA"/>
</dbReference>
<dbReference type="RefSeq" id="NP_462625.1">
    <property type="nucleotide sequence ID" value="NC_003197.2"/>
</dbReference>
<dbReference type="RefSeq" id="WP_001171890.1">
    <property type="nucleotide sequence ID" value="NC_003197.2"/>
</dbReference>
<dbReference type="SMR" id="Q8ZL48"/>
<dbReference type="STRING" id="99287.STM3725"/>
<dbReference type="PaxDb" id="99287-STM3725"/>
<dbReference type="GeneID" id="1255249"/>
<dbReference type="KEGG" id="stm:STM3725"/>
<dbReference type="PATRIC" id="fig|99287.12.peg.3941"/>
<dbReference type="HOGENOM" id="CLU_100149_0_1_6"/>
<dbReference type="OMA" id="MALMNRK"/>
<dbReference type="PhylomeDB" id="Q8ZL48"/>
<dbReference type="BioCyc" id="SENT99287:STM3725-MONOMER"/>
<dbReference type="UniPathway" id="UPA00241">
    <property type="reaction ID" value="UER00355"/>
</dbReference>
<dbReference type="Proteomes" id="UP000001014">
    <property type="component" value="Chromosome"/>
</dbReference>
<dbReference type="GO" id="GO:0005737">
    <property type="term" value="C:cytoplasm"/>
    <property type="evidence" value="ECO:0007669"/>
    <property type="project" value="UniProtKB-SubCell"/>
</dbReference>
<dbReference type="GO" id="GO:0005524">
    <property type="term" value="F:ATP binding"/>
    <property type="evidence" value="ECO:0007669"/>
    <property type="project" value="UniProtKB-KW"/>
</dbReference>
<dbReference type="GO" id="GO:0004595">
    <property type="term" value="F:pantetheine-phosphate adenylyltransferase activity"/>
    <property type="evidence" value="ECO:0000318"/>
    <property type="project" value="GO_Central"/>
</dbReference>
<dbReference type="GO" id="GO:0015937">
    <property type="term" value="P:coenzyme A biosynthetic process"/>
    <property type="evidence" value="ECO:0000318"/>
    <property type="project" value="GO_Central"/>
</dbReference>
<dbReference type="CDD" id="cd02163">
    <property type="entry name" value="PPAT"/>
    <property type="match status" value="1"/>
</dbReference>
<dbReference type="FunFam" id="3.40.50.620:FF:000012">
    <property type="entry name" value="Phosphopantetheine adenylyltransferase"/>
    <property type="match status" value="1"/>
</dbReference>
<dbReference type="Gene3D" id="3.40.50.620">
    <property type="entry name" value="HUPs"/>
    <property type="match status" value="1"/>
</dbReference>
<dbReference type="HAMAP" id="MF_00151">
    <property type="entry name" value="PPAT_bact"/>
    <property type="match status" value="1"/>
</dbReference>
<dbReference type="InterPro" id="IPR004821">
    <property type="entry name" value="Cyt_trans-like"/>
</dbReference>
<dbReference type="InterPro" id="IPR001980">
    <property type="entry name" value="PPAT"/>
</dbReference>
<dbReference type="InterPro" id="IPR014729">
    <property type="entry name" value="Rossmann-like_a/b/a_fold"/>
</dbReference>
<dbReference type="NCBIfam" id="TIGR01510">
    <property type="entry name" value="coaD_prev_kdtB"/>
    <property type="match status" value="1"/>
</dbReference>
<dbReference type="NCBIfam" id="TIGR00125">
    <property type="entry name" value="cyt_tran_rel"/>
    <property type="match status" value="1"/>
</dbReference>
<dbReference type="PANTHER" id="PTHR21342">
    <property type="entry name" value="PHOSPHOPANTETHEINE ADENYLYLTRANSFERASE"/>
    <property type="match status" value="1"/>
</dbReference>
<dbReference type="PANTHER" id="PTHR21342:SF1">
    <property type="entry name" value="PHOSPHOPANTETHEINE ADENYLYLTRANSFERASE"/>
    <property type="match status" value="1"/>
</dbReference>
<dbReference type="Pfam" id="PF01467">
    <property type="entry name" value="CTP_transf_like"/>
    <property type="match status" value="1"/>
</dbReference>
<dbReference type="PRINTS" id="PR01020">
    <property type="entry name" value="LPSBIOSNTHSS"/>
</dbReference>
<dbReference type="SUPFAM" id="SSF52374">
    <property type="entry name" value="Nucleotidylyl transferase"/>
    <property type="match status" value="1"/>
</dbReference>
<name>COAD_SALTY</name>
<reference key="1">
    <citation type="journal article" date="2001" name="Nature">
        <title>Complete genome sequence of Salmonella enterica serovar Typhimurium LT2.</title>
        <authorList>
            <person name="McClelland M."/>
            <person name="Sanderson K.E."/>
            <person name="Spieth J."/>
            <person name="Clifton S.W."/>
            <person name="Latreille P."/>
            <person name="Courtney L."/>
            <person name="Porwollik S."/>
            <person name="Ali J."/>
            <person name="Dante M."/>
            <person name="Du F."/>
            <person name="Hou S."/>
            <person name="Layman D."/>
            <person name="Leonard S."/>
            <person name="Nguyen C."/>
            <person name="Scott K."/>
            <person name="Holmes A."/>
            <person name="Grewal N."/>
            <person name="Mulvaney E."/>
            <person name="Ryan E."/>
            <person name="Sun H."/>
            <person name="Florea L."/>
            <person name="Miller W."/>
            <person name="Stoneking T."/>
            <person name="Nhan M."/>
            <person name="Waterston R."/>
            <person name="Wilson R.K."/>
        </authorList>
    </citation>
    <scope>NUCLEOTIDE SEQUENCE [LARGE SCALE GENOMIC DNA]</scope>
    <source>
        <strain>LT2 / SGSC1412 / ATCC 700720</strain>
    </source>
</reference>
<proteinExistence type="inferred from homology"/>
<comment type="function">
    <text evidence="1">Reversibly transfers an adenylyl group from ATP to 4'-phosphopantetheine, yielding dephospho-CoA (dPCoA) and pyrophosphate.</text>
</comment>
<comment type="catalytic activity">
    <reaction evidence="1">
        <text>(R)-4'-phosphopantetheine + ATP + H(+) = 3'-dephospho-CoA + diphosphate</text>
        <dbReference type="Rhea" id="RHEA:19801"/>
        <dbReference type="ChEBI" id="CHEBI:15378"/>
        <dbReference type="ChEBI" id="CHEBI:30616"/>
        <dbReference type="ChEBI" id="CHEBI:33019"/>
        <dbReference type="ChEBI" id="CHEBI:57328"/>
        <dbReference type="ChEBI" id="CHEBI:61723"/>
        <dbReference type="EC" id="2.7.7.3"/>
    </reaction>
</comment>
<comment type="cofactor">
    <cofactor evidence="1">
        <name>Mg(2+)</name>
        <dbReference type="ChEBI" id="CHEBI:18420"/>
    </cofactor>
</comment>
<comment type="pathway">
    <text evidence="1">Cofactor biosynthesis; coenzyme A biosynthesis; CoA from (R)-pantothenate: step 4/5.</text>
</comment>
<comment type="subunit">
    <text evidence="1">Homohexamer.</text>
</comment>
<comment type="subcellular location">
    <subcellularLocation>
        <location evidence="1">Cytoplasm</location>
    </subcellularLocation>
</comment>
<comment type="similarity">
    <text evidence="1">Belongs to the bacterial CoaD family.</text>
</comment>
<organism>
    <name type="scientific">Salmonella typhimurium (strain LT2 / SGSC1412 / ATCC 700720)</name>
    <dbReference type="NCBI Taxonomy" id="99287"/>
    <lineage>
        <taxon>Bacteria</taxon>
        <taxon>Pseudomonadati</taxon>
        <taxon>Pseudomonadota</taxon>
        <taxon>Gammaproteobacteria</taxon>
        <taxon>Enterobacterales</taxon>
        <taxon>Enterobacteriaceae</taxon>
        <taxon>Salmonella</taxon>
    </lineage>
</organism>
<accession>Q8ZL48</accession>
<sequence length="159" mass="17956">MQKRAIYPGTFDPITNGHLDIVTRATQMFDHVILAIAASPSKKPMFTLDERVALAQKATAHLGNVEVVGFSDLMANFARDRQANILIRGLRAVADFEYEMQLAHMNRHLMPQLESVFLMPSKEWSFISSSLVKEVARHQGDVTHFLPDNVHQALMDKLK</sequence>
<keyword id="KW-0067">ATP-binding</keyword>
<keyword id="KW-0173">Coenzyme A biosynthesis</keyword>
<keyword id="KW-0963">Cytoplasm</keyword>
<keyword id="KW-0460">Magnesium</keyword>
<keyword id="KW-0547">Nucleotide-binding</keyword>
<keyword id="KW-0548">Nucleotidyltransferase</keyword>
<keyword id="KW-1185">Reference proteome</keyword>
<keyword id="KW-0808">Transferase</keyword>
<evidence type="ECO:0000255" key="1">
    <source>
        <dbReference type="HAMAP-Rule" id="MF_00151"/>
    </source>
</evidence>
<gene>
    <name evidence="1" type="primary">coaD</name>
    <name type="synonym">kdtB</name>
    <name type="ordered locus">STM3725</name>
</gene>
<protein>
    <recommendedName>
        <fullName evidence="1">Phosphopantetheine adenylyltransferase</fullName>
        <ecNumber evidence="1">2.7.7.3</ecNumber>
    </recommendedName>
    <alternativeName>
        <fullName evidence="1">Dephospho-CoA pyrophosphorylase</fullName>
    </alternativeName>
    <alternativeName>
        <fullName evidence="1">Pantetheine-phosphate adenylyltransferase</fullName>
        <shortName evidence="1">PPAT</shortName>
    </alternativeName>
</protein>
<feature type="chain" id="PRO_0000156267" description="Phosphopantetheine adenylyltransferase">
    <location>
        <begin position="1"/>
        <end position="159"/>
    </location>
</feature>
<feature type="binding site" evidence="1">
    <location>
        <begin position="10"/>
        <end position="11"/>
    </location>
    <ligand>
        <name>ATP</name>
        <dbReference type="ChEBI" id="CHEBI:30616"/>
    </ligand>
</feature>
<feature type="binding site" evidence="1">
    <location>
        <position position="10"/>
    </location>
    <ligand>
        <name>substrate</name>
    </ligand>
</feature>
<feature type="binding site" evidence="1">
    <location>
        <position position="18"/>
    </location>
    <ligand>
        <name>ATP</name>
        <dbReference type="ChEBI" id="CHEBI:30616"/>
    </ligand>
</feature>
<feature type="binding site" evidence="1">
    <location>
        <position position="42"/>
    </location>
    <ligand>
        <name>substrate</name>
    </ligand>
</feature>
<feature type="binding site" evidence="1">
    <location>
        <position position="74"/>
    </location>
    <ligand>
        <name>substrate</name>
    </ligand>
</feature>
<feature type="binding site" evidence="1">
    <location>
        <position position="88"/>
    </location>
    <ligand>
        <name>substrate</name>
    </ligand>
</feature>
<feature type="binding site" evidence="1">
    <location>
        <begin position="89"/>
        <end position="91"/>
    </location>
    <ligand>
        <name>ATP</name>
        <dbReference type="ChEBI" id="CHEBI:30616"/>
    </ligand>
</feature>
<feature type="binding site" evidence="1">
    <location>
        <position position="99"/>
    </location>
    <ligand>
        <name>ATP</name>
        <dbReference type="ChEBI" id="CHEBI:30616"/>
    </ligand>
</feature>
<feature type="binding site" evidence="1">
    <location>
        <begin position="124"/>
        <end position="130"/>
    </location>
    <ligand>
        <name>ATP</name>
        <dbReference type="ChEBI" id="CHEBI:30616"/>
    </ligand>
</feature>
<feature type="site" description="Transition state stabilizer" evidence="1">
    <location>
        <position position="18"/>
    </location>
</feature>